<protein>
    <recommendedName>
        <fullName>Acidic phospholipase A2 BA1</fullName>
        <shortName>svPLA2</shortName>
        <ecNumber>3.1.1.4</ecNumber>
    </recommendedName>
    <alternativeName>
        <fullName>Phosphatidylcholine 2-acylhydrolase</fullName>
    </alternativeName>
</protein>
<sequence length="124" mass="14059">SLIQFEKMIKKMTGKEPVVSYAFYGCYCGSGGQGKPKDATDRCCFVHDCCYEKVTGCDPKWDDYTYSWKDGDIVCGGDDPCKKEICECDRAAAICFRDNLNTYNDRKYWAFGAKNCPQEESEPC</sequence>
<comment type="function">
    <text evidence="1">PLA2 catalyzes the calcium-dependent hydrolysis of the 2-acyl groups in 3-sn-phosphoglycerides.</text>
</comment>
<comment type="catalytic activity">
    <reaction evidence="3 4">
        <text>a 1,2-diacyl-sn-glycero-3-phosphocholine + H2O = a 1-acyl-sn-glycero-3-phosphocholine + a fatty acid + H(+)</text>
        <dbReference type="Rhea" id="RHEA:15801"/>
        <dbReference type="ChEBI" id="CHEBI:15377"/>
        <dbReference type="ChEBI" id="CHEBI:15378"/>
        <dbReference type="ChEBI" id="CHEBI:28868"/>
        <dbReference type="ChEBI" id="CHEBI:57643"/>
        <dbReference type="ChEBI" id="CHEBI:58168"/>
        <dbReference type="EC" id="3.1.1.4"/>
    </reaction>
</comment>
<comment type="cofactor">
    <cofactor evidence="1">
        <name>Ca(2+)</name>
        <dbReference type="ChEBI" id="CHEBI:29108"/>
    </cofactor>
    <text evidence="1">Binds 1 Ca(2+) ion.</text>
</comment>
<comment type="subcellular location">
    <subcellularLocation>
        <location evidence="1">Secreted</location>
    </subcellularLocation>
</comment>
<comment type="tissue specificity">
    <text>Expressed by the venom gland.</text>
</comment>
<comment type="similarity">
    <text evidence="5">Belongs to the phospholipase A2 family. Group II subfamily. D49 sub-subfamily.</text>
</comment>
<reference key="1">
    <citation type="journal article" date="1998" name="Toxicon">
        <title>Diversity of cDNAs encoding phospholipase A2 from Agkistrodon halys pallas venom, and its expression in E. coli.</title>
        <authorList>
            <person name="Pan H."/>
            <person name="Liu X.-L."/>
            <person name="Ou-Yang L.-L."/>
            <person name="Yang G.-Z."/>
            <person name="Zhou Y.-C."/>
            <person name="Li Z.-P."/>
            <person name="Wu X.-F."/>
        </authorList>
    </citation>
    <scope>NUCLEOTIDE SEQUENCE [MRNA]</scope>
    <source>
        <tissue>Venom gland</tissue>
    </source>
</reference>
<feature type="chain" id="PRO_0000161600" description="Acidic phospholipase A2 BA1">
    <location>
        <begin position="1"/>
        <end position="124"/>
    </location>
</feature>
<feature type="active site" evidence="2">
    <location>
        <position position="47"/>
    </location>
</feature>
<feature type="active site" evidence="2">
    <location>
        <position position="89"/>
    </location>
</feature>
<feature type="binding site" evidence="2">
    <location>
        <position position="27"/>
    </location>
    <ligand>
        <name>Ca(2+)</name>
        <dbReference type="ChEBI" id="CHEBI:29108"/>
    </ligand>
</feature>
<feature type="binding site" evidence="2">
    <location>
        <position position="29"/>
    </location>
    <ligand>
        <name>Ca(2+)</name>
        <dbReference type="ChEBI" id="CHEBI:29108"/>
    </ligand>
</feature>
<feature type="binding site" evidence="2">
    <location>
        <position position="31"/>
    </location>
    <ligand>
        <name>Ca(2+)</name>
        <dbReference type="ChEBI" id="CHEBI:29108"/>
    </ligand>
</feature>
<feature type="binding site" evidence="2">
    <location>
        <position position="48"/>
    </location>
    <ligand>
        <name>Ca(2+)</name>
        <dbReference type="ChEBI" id="CHEBI:29108"/>
    </ligand>
</feature>
<feature type="disulfide bond" evidence="2">
    <location>
        <begin position="26"/>
        <end position="116"/>
    </location>
</feature>
<feature type="disulfide bond" evidence="2">
    <location>
        <begin position="28"/>
        <end position="44"/>
    </location>
</feature>
<feature type="disulfide bond" evidence="2">
    <location>
        <begin position="43"/>
        <end position="95"/>
    </location>
</feature>
<feature type="disulfide bond" evidence="2">
    <location>
        <begin position="49"/>
        <end position="124"/>
    </location>
</feature>
<feature type="disulfide bond" evidence="2">
    <location>
        <begin position="50"/>
        <end position="88"/>
    </location>
</feature>
<feature type="disulfide bond" evidence="2">
    <location>
        <begin position="57"/>
        <end position="81"/>
    </location>
</feature>
<feature type="disulfide bond" evidence="2">
    <location>
        <begin position="75"/>
        <end position="86"/>
    </location>
</feature>
<name>PA2A5_GLOHA</name>
<keyword id="KW-0106">Calcium</keyword>
<keyword id="KW-1015">Disulfide bond</keyword>
<keyword id="KW-0378">Hydrolase</keyword>
<keyword id="KW-0442">Lipid degradation</keyword>
<keyword id="KW-0443">Lipid metabolism</keyword>
<keyword id="KW-0479">Metal-binding</keyword>
<keyword id="KW-0964">Secreted</keyword>
<organism>
    <name type="scientific">Gloydius halys</name>
    <name type="common">Chinese water mocassin</name>
    <name type="synonym">Agkistrodon halys</name>
    <dbReference type="NCBI Taxonomy" id="8714"/>
    <lineage>
        <taxon>Eukaryota</taxon>
        <taxon>Metazoa</taxon>
        <taxon>Chordata</taxon>
        <taxon>Craniata</taxon>
        <taxon>Vertebrata</taxon>
        <taxon>Euteleostomi</taxon>
        <taxon>Lepidosauria</taxon>
        <taxon>Squamata</taxon>
        <taxon>Bifurcata</taxon>
        <taxon>Unidentata</taxon>
        <taxon>Episquamata</taxon>
        <taxon>Toxicofera</taxon>
        <taxon>Serpentes</taxon>
        <taxon>Colubroidea</taxon>
        <taxon>Viperidae</taxon>
        <taxon>Crotalinae</taxon>
        <taxon>Gloydius</taxon>
    </lineage>
</organism>
<proteinExistence type="evidence at transcript level"/>
<evidence type="ECO:0000250" key="1"/>
<evidence type="ECO:0000250" key="2">
    <source>
        <dbReference type="UniProtKB" id="O42187"/>
    </source>
</evidence>
<evidence type="ECO:0000255" key="3">
    <source>
        <dbReference type="PROSITE-ProRule" id="PRU10035"/>
    </source>
</evidence>
<evidence type="ECO:0000255" key="4">
    <source>
        <dbReference type="PROSITE-ProRule" id="PRU10036"/>
    </source>
</evidence>
<evidence type="ECO:0000305" key="5"/>
<accession>O42189</accession>
<dbReference type="EC" id="3.1.1.4"/>
<dbReference type="EMBL" id="AF015244">
    <property type="protein sequence ID" value="AAB71846.1"/>
    <property type="molecule type" value="mRNA"/>
</dbReference>
<dbReference type="SMR" id="O42189"/>
<dbReference type="GO" id="GO:0005576">
    <property type="term" value="C:extracellular region"/>
    <property type="evidence" value="ECO:0007669"/>
    <property type="project" value="UniProtKB-SubCell"/>
</dbReference>
<dbReference type="GO" id="GO:0005509">
    <property type="term" value="F:calcium ion binding"/>
    <property type="evidence" value="ECO:0007669"/>
    <property type="project" value="InterPro"/>
</dbReference>
<dbReference type="GO" id="GO:0047498">
    <property type="term" value="F:calcium-dependent phospholipase A2 activity"/>
    <property type="evidence" value="ECO:0007669"/>
    <property type="project" value="TreeGrafter"/>
</dbReference>
<dbReference type="GO" id="GO:0005543">
    <property type="term" value="F:phospholipid binding"/>
    <property type="evidence" value="ECO:0007669"/>
    <property type="project" value="TreeGrafter"/>
</dbReference>
<dbReference type="GO" id="GO:0050482">
    <property type="term" value="P:arachidonate secretion"/>
    <property type="evidence" value="ECO:0007669"/>
    <property type="project" value="InterPro"/>
</dbReference>
<dbReference type="GO" id="GO:0016042">
    <property type="term" value="P:lipid catabolic process"/>
    <property type="evidence" value="ECO:0007669"/>
    <property type="project" value="UniProtKB-KW"/>
</dbReference>
<dbReference type="GO" id="GO:0042130">
    <property type="term" value="P:negative regulation of T cell proliferation"/>
    <property type="evidence" value="ECO:0007669"/>
    <property type="project" value="TreeGrafter"/>
</dbReference>
<dbReference type="GO" id="GO:0006644">
    <property type="term" value="P:phospholipid metabolic process"/>
    <property type="evidence" value="ECO:0007669"/>
    <property type="project" value="InterPro"/>
</dbReference>
<dbReference type="CDD" id="cd00125">
    <property type="entry name" value="PLA2c"/>
    <property type="match status" value="1"/>
</dbReference>
<dbReference type="FunFam" id="1.20.90.10:FF:000001">
    <property type="entry name" value="Basic phospholipase A2 homolog"/>
    <property type="match status" value="1"/>
</dbReference>
<dbReference type="Gene3D" id="1.20.90.10">
    <property type="entry name" value="Phospholipase A2 domain"/>
    <property type="match status" value="1"/>
</dbReference>
<dbReference type="InterPro" id="IPR001211">
    <property type="entry name" value="PLipase_A2"/>
</dbReference>
<dbReference type="InterPro" id="IPR033112">
    <property type="entry name" value="PLipase_A2_Asp_AS"/>
</dbReference>
<dbReference type="InterPro" id="IPR016090">
    <property type="entry name" value="PLipase_A2_dom"/>
</dbReference>
<dbReference type="InterPro" id="IPR036444">
    <property type="entry name" value="PLipase_A2_dom_sf"/>
</dbReference>
<dbReference type="InterPro" id="IPR033113">
    <property type="entry name" value="PLipase_A2_His_AS"/>
</dbReference>
<dbReference type="PANTHER" id="PTHR11716">
    <property type="entry name" value="PHOSPHOLIPASE A2 FAMILY MEMBER"/>
    <property type="match status" value="1"/>
</dbReference>
<dbReference type="PANTHER" id="PTHR11716:SF9">
    <property type="entry name" value="PHOSPHOLIPASE A2, MEMBRANE ASSOCIATED"/>
    <property type="match status" value="1"/>
</dbReference>
<dbReference type="Pfam" id="PF00068">
    <property type="entry name" value="Phospholip_A2_1"/>
    <property type="match status" value="1"/>
</dbReference>
<dbReference type="PRINTS" id="PR00389">
    <property type="entry name" value="PHPHLIPASEA2"/>
</dbReference>
<dbReference type="SMART" id="SM00085">
    <property type="entry name" value="PA2c"/>
    <property type="match status" value="1"/>
</dbReference>
<dbReference type="SUPFAM" id="SSF48619">
    <property type="entry name" value="Phospholipase A2, PLA2"/>
    <property type="match status" value="1"/>
</dbReference>
<dbReference type="PROSITE" id="PS00119">
    <property type="entry name" value="PA2_ASP"/>
    <property type="match status" value="1"/>
</dbReference>
<dbReference type="PROSITE" id="PS00118">
    <property type="entry name" value="PA2_HIS"/>
    <property type="match status" value="1"/>
</dbReference>